<protein>
    <recommendedName>
        <fullName>Polycomb complex protein BMI-1-B</fullName>
    </recommendedName>
    <alternativeName>
        <fullName>Polycomb group RING finger protein 4-B</fullName>
    </alternativeName>
</protein>
<proteinExistence type="evidence at transcript level"/>
<evidence type="ECO:0000250" key="1"/>
<evidence type="ECO:0000255" key="2"/>
<evidence type="ECO:0000255" key="3">
    <source>
        <dbReference type="PROSITE-ProRule" id="PRU00175"/>
    </source>
</evidence>
<evidence type="ECO:0000256" key="4">
    <source>
        <dbReference type="SAM" id="MobiDB-lite"/>
    </source>
</evidence>
<name>BMI1B_DANRE</name>
<dbReference type="EMBL" id="BC053151">
    <property type="protein sequence ID" value="AAH53151.1"/>
    <property type="molecule type" value="mRNA"/>
</dbReference>
<dbReference type="RefSeq" id="NP_001074220.1">
    <property type="nucleotide sequence ID" value="NM_001080751.2"/>
</dbReference>
<dbReference type="SMR" id="Q7T3E6"/>
<dbReference type="BioGRID" id="90317">
    <property type="interactions" value="3"/>
</dbReference>
<dbReference type="STRING" id="7955.ENSDARP00000115422"/>
<dbReference type="PaxDb" id="7955-ENSDARP00000115422"/>
<dbReference type="Ensembl" id="ENSDART00000185792">
    <property type="protein sequence ID" value="ENSDARP00000157311"/>
    <property type="gene ID" value="ENSDARG00000013076"/>
</dbReference>
<dbReference type="GeneID" id="394249"/>
<dbReference type="KEGG" id="dre:394249"/>
<dbReference type="AGR" id="ZFIN:ZDB-GENE-040116-4"/>
<dbReference type="CTD" id="394249"/>
<dbReference type="ZFIN" id="ZDB-GENE-040116-4">
    <property type="gene designation" value="bmi1b"/>
</dbReference>
<dbReference type="eggNOG" id="KOG2660">
    <property type="taxonomic scope" value="Eukaryota"/>
</dbReference>
<dbReference type="InParanoid" id="Q7T3E6"/>
<dbReference type="OrthoDB" id="1305878at2759"/>
<dbReference type="PRO" id="PR:Q7T3E6"/>
<dbReference type="Proteomes" id="UP000000437">
    <property type="component" value="Chromosome 2"/>
</dbReference>
<dbReference type="Bgee" id="ENSDARG00000013076">
    <property type="expression patterns" value="Expressed in ovary and 28 other cell types or tissues"/>
</dbReference>
<dbReference type="ExpressionAtlas" id="Q7T3E6">
    <property type="expression patterns" value="baseline and differential"/>
</dbReference>
<dbReference type="GO" id="GO:0031519">
    <property type="term" value="C:PcG protein complex"/>
    <property type="evidence" value="ECO:0000250"/>
    <property type="project" value="UniProtKB"/>
</dbReference>
<dbReference type="GO" id="GO:0035102">
    <property type="term" value="C:PRC1 complex"/>
    <property type="evidence" value="ECO:0000318"/>
    <property type="project" value="GO_Central"/>
</dbReference>
<dbReference type="GO" id="GO:1990841">
    <property type="term" value="F:promoter-specific chromatin binding"/>
    <property type="evidence" value="ECO:0000250"/>
    <property type="project" value="UniProtKB"/>
</dbReference>
<dbReference type="GO" id="GO:0008270">
    <property type="term" value="F:zinc ion binding"/>
    <property type="evidence" value="ECO:0007669"/>
    <property type="project" value="UniProtKB-KW"/>
</dbReference>
<dbReference type="GO" id="GO:0021549">
    <property type="term" value="P:cerebellum development"/>
    <property type="evidence" value="ECO:0000316"/>
    <property type="project" value="ZFIN"/>
</dbReference>
<dbReference type="GO" id="GO:0045814">
    <property type="term" value="P:negative regulation of gene expression, epigenetic"/>
    <property type="evidence" value="ECO:0000250"/>
    <property type="project" value="UniProtKB"/>
</dbReference>
<dbReference type="GO" id="GO:0000122">
    <property type="term" value="P:negative regulation of transcription by RNA polymerase II"/>
    <property type="evidence" value="ECO:0000318"/>
    <property type="project" value="GO_Central"/>
</dbReference>
<dbReference type="CDD" id="cd17165">
    <property type="entry name" value="RAWUL_PCGF4"/>
    <property type="match status" value="1"/>
</dbReference>
<dbReference type="CDD" id="cd16736">
    <property type="entry name" value="RING-HC_PCGF4"/>
    <property type="match status" value="1"/>
</dbReference>
<dbReference type="FunFam" id="3.10.20.90:FF:000106">
    <property type="entry name" value="Polycomb complex protein BMI-1"/>
    <property type="match status" value="1"/>
</dbReference>
<dbReference type="FunFam" id="3.30.40.10:FF:000082">
    <property type="entry name" value="Polycomb group ring finger 2"/>
    <property type="match status" value="1"/>
</dbReference>
<dbReference type="Gene3D" id="3.10.20.90">
    <property type="entry name" value="Phosphatidylinositol 3-kinase Catalytic Subunit, Chain A, domain 1"/>
    <property type="match status" value="1"/>
</dbReference>
<dbReference type="Gene3D" id="3.30.40.10">
    <property type="entry name" value="Zinc/RING finger domain, C3HC4 (zinc finger)"/>
    <property type="match status" value="1"/>
</dbReference>
<dbReference type="InterPro" id="IPR032443">
    <property type="entry name" value="RAWUL"/>
</dbReference>
<dbReference type="InterPro" id="IPR001841">
    <property type="entry name" value="Znf_RING"/>
</dbReference>
<dbReference type="InterPro" id="IPR013083">
    <property type="entry name" value="Znf_RING/FYVE/PHD"/>
</dbReference>
<dbReference type="InterPro" id="IPR017907">
    <property type="entry name" value="Znf_RING_CS"/>
</dbReference>
<dbReference type="PANTHER" id="PTHR10825:SF21">
    <property type="entry name" value="POLYCOMB COMPLEX PROTEIN BMI-1"/>
    <property type="match status" value="1"/>
</dbReference>
<dbReference type="PANTHER" id="PTHR10825">
    <property type="entry name" value="RING FINGER DOMAIN-CONTAINING, POLYCOMB GROUP COMPONENT"/>
    <property type="match status" value="1"/>
</dbReference>
<dbReference type="Pfam" id="PF16207">
    <property type="entry name" value="RAWUL"/>
    <property type="match status" value="1"/>
</dbReference>
<dbReference type="Pfam" id="PF13923">
    <property type="entry name" value="zf-C3HC4_2"/>
    <property type="match status" value="1"/>
</dbReference>
<dbReference type="SMART" id="SM00184">
    <property type="entry name" value="RING"/>
    <property type="match status" value="1"/>
</dbReference>
<dbReference type="SUPFAM" id="SSF57850">
    <property type="entry name" value="RING/U-box"/>
    <property type="match status" value="1"/>
</dbReference>
<dbReference type="PROSITE" id="PS00518">
    <property type="entry name" value="ZF_RING_1"/>
    <property type="match status" value="1"/>
</dbReference>
<dbReference type="PROSITE" id="PS50089">
    <property type="entry name" value="ZF_RING_2"/>
    <property type="match status" value="1"/>
</dbReference>
<keyword id="KW-0156">Chromatin regulator</keyword>
<keyword id="KW-0479">Metal-binding</keyword>
<keyword id="KW-0539">Nucleus</keyword>
<keyword id="KW-1185">Reference proteome</keyword>
<keyword id="KW-0678">Repressor</keyword>
<keyword id="KW-0804">Transcription</keyword>
<keyword id="KW-0805">Transcription regulation</keyword>
<keyword id="KW-0862">Zinc</keyword>
<keyword id="KW-0863">Zinc-finger</keyword>
<reference key="1">
    <citation type="submission" date="2003-06" db="EMBL/GenBank/DDBJ databases">
        <authorList>
            <consortium name="NIH - Zebrafish Gene Collection (ZGC) project"/>
        </authorList>
    </citation>
    <scope>NUCLEOTIDE SEQUENCE [LARGE SCALE MRNA]</scope>
    <source>
        <tissue>Kidney</tissue>
    </source>
</reference>
<sequence>MHRTTRIKITELNPHLMCVLCGGYFIDATTIVECLHSFCKMCIVRYLETSKYCPICDVQVHKTKPLLNIRSDKTLQDIVYKLVPGLFKNEMKRRRDFYAEHPVDATNGSNEDRGEVSDEDKRIIADDEIISLSIEFFDQKKLDGKDGEEKESTKEVTVKRYLQCPAAMTVMHLRKFLRSKMDIPCTFQIEVMYEDEPLKDYYTLMDIAYIYTWRRNGPLPLKYRVRPGCKKIKLSSPRNDMSGGRRPDTESDSSSDKPNSPSIVAAPSTSSSMPSPNTPVQSTHPSFPHISTINGVSAKVGHNGQTPFSSKVCKTSHNGSNSLG</sequence>
<comment type="function">
    <text evidence="1">Component of a Polycomb group (PcG) multiprotein PRC1-like complex, a complex class required to maintain the transcriptionally repressive state of many genes, including Hox genes, throughout development. PcG PRC1 complex acts via chromatin remodeling and modification of histones; it mediates monoubiquitination of histone H2A 'Lys-119', rendering chromatin heritably changed in its expressibility. In the PRC1 complex, it is required to stimulate the E3 ubiquitin-protein ligase activity of rnf2 (By similarity).</text>
</comment>
<comment type="subunit">
    <text evidence="1">Component of a PRC1-like complex. Homodimer. Interacts with cbx2 (By similarity).</text>
</comment>
<comment type="subcellular location">
    <subcellularLocation>
        <location evidence="1">Nucleus</location>
    </subcellularLocation>
</comment>
<accession>Q7T3E6</accession>
<feature type="chain" id="PRO_0000296631" description="Polycomb complex protein BMI-1-B">
    <location>
        <begin position="1"/>
        <end position="324"/>
    </location>
</feature>
<feature type="zinc finger region" description="RING-type" evidence="3">
    <location>
        <begin position="18"/>
        <end position="57"/>
    </location>
</feature>
<feature type="region of interest" description="Disordered" evidence="4">
    <location>
        <begin position="232"/>
        <end position="324"/>
    </location>
</feature>
<feature type="short sequence motif" description="Nuclear localization signal" evidence="2">
    <location>
        <begin position="81"/>
        <end position="95"/>
    </location>
</feature>
<feature type="compositionally biased region" description="Low complexity" evidence="4">
    <location>
        <begin position="256"/>
        <end position="279"/>
    </location>
</feature>
<feature type="compositionally biased region" description="Polar residues" evidence="4">
    <location>
        <begin position="280"/>
        <end position="295"/>
    </location>
</feature>
<feature type="compositionally biased region" description="Polar residues" evidence="4">
    <location>
        <begin position="303"/>
        <end position="324"/>
    </location>
</feature>
<organism>
    <name type="scientific">Danio rerio</name>
    <name type="common">Zebrafish</name>
    <name type="synonym">Brachydanio rerio</name>
    <dbReference type="NCBI Taxonomy" id="7955"/>
    <lineage>
        <taxon>Eukaryota</taxon>
        <taxon>Metazoa</taxon>
        <taxon>Chordata</taxon>
        <taxon>Craniata</taxon>
        <taxon>Vertebrata</taxon>
        <taxon>Euteleostomi</taxon>
        <taxon>Actinopterygii</taxon>
        <taxon>Neopterygii</taxon>
        <taxon>Teleostei</taxon>
        <taxon>Ostariophysi</taxon>
        <taxon>Cypriniformes</taxon>
        <taxon>Danionidae</taxon>
        <taxon>Danioninae</taxon>
        <taxon>Danio</taxon>
    </lineage>
</organism>
<gene>
    <name type="primary">bmi1b</name>
    <name type="synonym">pcgf4b</name>
</gene>